<accession>A0AF20</accession>
<gene>
    <name evidence="1" type="primary">coaX</name>
    <name type="ordered locus">lwe0184</name>
</gene>
<sequence length="259" mass="28256">MILVIDVGNTNCTVGVYEKQKLLKHWRMTTDRHRTSDELGMTVLNFFSYANLTPSDIQGIIISSVVPPIMHAMETMCVRYFNIRPLIVGPGIKTGLNVKVDNPREIGSDRIVNAVAASEEYGTPIIVVDFGTATTFCYIDELGAYQGGAIAPGIMISTEALYNRAAKLPRVDIAESNQIIGKSTVSSMQAGIFYGFVGQCEGIIAEMKKQSNSNPVVVATGGLARMITEKSSAVDILDPFLTLKGLELLYRRNKPTTEK</sequence>
<comment type="function">
    <text evidence="1">Catalyzes the phosphorylation of pantothenate (Pan), the first step in CoA biosynthesis.</text>
</comment>
<comment type="catalytic activity">
    <reaction evidence="1">
        <text>(R)-pantothenate + ATP = (R)-4'-phosphopantothenate + ADP + H(+)</text>
        <dbReference type="Rhea" id="RHEA:16373"/>
        <dbReference type="ChEBI" id="CHEBI:10986"/>
        <dbReference type="ChEBI" id="CHEBI:15378"/>
        <dbReference type="ChEBI" id="CHEBI:29032"/>
        <dbReference type="ChEBI" id="CHEBI:30616"/>
        <dbReference type="ChEBI" id="CHEBI:456216"/>
        <dbReference type="EC" id="2.7.1.33"/>
    </reaction>
</comment>
<comment type="cofactor">
    <cofactor evidence="1">
        <name>NH4(+)</name>
        <dbReference type="ChEBI" id="CHEBI:28938"/>
    </cofactor>
    <cofactor evidence="1">
        <name>K(+)</name>
        <dbReference type="ChEBI" id="CHEBI:29103"/>
    </cofactor>
    <text evidence="1">A monovalent cation. Ammonium or potassium.</text>
</comment>
<comment type="pathway">
    <text evidence="1">Cofactor biosynthesis; coenzyme A biosynthesis; CoA from (R)-pantothenate: step 1/5.</text>
</comment>
<comment type="subunit">
    <text evidence="1">Homodimer.</text>
</comment>
<comment type="subcellular location">
    <subcellularLocation>
        <location evidence="1">Cytoplasm</location>
    </subcellularLocation>
</comment>
<comment type="similarity">
    <text evidence="1">Belongs to the type III pantothenate kinase family.</text>
</comment>
<dbReference type="EC" id="2.7.1.33" evidence="1"/>
<dbReference type="EMBL" id="AM263198">
    <property type="protein sequence ID" value="CAK19602.1"/>
    <property type="molecule type" value="Genomic_DNA"/>
</dbReference>
<dbReference type="RefSeq" id="WP_011701048.1">
    <property type="nucleotide sequence ID" value="NC_008555.1"/>
</dbReference>
<dbReference type="SMR" id="A0AF20"/>
<dbReference type="STRING" id="386043.lwe0184"/>
<dbReference type="GeneID" id="61188063"/>
<dbReference type="KEGG" id="lwe:lwe0184"/>
<dbReference type="eggNOG" id="COG1521">
    <property type="taxonomic scope" value="Bacteria"/>
</dbReference>
<dbReference type="HOGENOM" id="CLU_066627_1_0_9"/>
<dbReference type="OrthoDB" id="9804707at2"/>
<dbReference type="UniPathway" id="UPA00241">
    <property type="reaction ID" value="UER00352"/>
</dbReference>
<dbReference type="Proteomes" id="UP000000779">
    <property type="component" value="Chromosome"/>
</dbReference>
<dbReference type="GO" id="GO:0005737">
    <property type="term" value="C:cytoplasm"/>
    <property type="evidence" value="ECO:0007669"/>
    <property type="project" value="UniProtKB-SubCell"/>
</dbReference>
<dbReference type="GO" id="GO:0005524">
    <property type="term" value="F:ATP binding"/>
    <property type="evidence" value="ECO:0007669"/>
    <property type="project" value="UniProtKB-UniRule"/>
</dbReference>
<dbReference type="GO" id="GO:0046872">
    <property type="term" value="F:metal ion binding"/>
    <property type="evidence" value="ECO:0007669"/>
    <property type="project" value="UniProtKB-KW"/>
</dbReference>
<dbReference type="GO" id="GO:0004594">
    <property type="term" value="F:pantothenate kinase activity"/>
    <property type="evidence" value="ECO:0007669"/>
    <property type="project" value="UniProtKB-UniRule"/>
</dbReference>
<dbReference type="GO" id="GO:0015937">
    <property type="term" value="P:coenzyme A biosynthetic process"/>
    <property type="evidence" value="ECO:0007669"/>
    <property type="project" value="UniProtKB-UniRule"/>
</dbReference>
<dbReference type="CDD" id="cd24015">
    <property type="entry name" value="ASKHA_NBD_PanK-III"/>
    <property type="match status" value="1"/>
</dbReference>
<dbReference type="Gene3D" id="3.30.420.40">
    <property type="match status" value="2"/>
</dbReference>
<dbReference type="HAMAP" id="MF_01274">
    <property type="entry name" value="Pantothen_kinase_3"/>
    <property type="match status" value="1"/>
</dbReference>
<dbReference type="InterPro" id="IPR043129">
    <property type="entry name" value="ATPase_NBD"/>
</dbReference>
<dbReference type="InterPro" id="IPR004619">
    <property type="entry name" value="Type_III_PanK"/>
</dbReference>
<dbReference type="NCBIfam" id="TIGR00671">
    <property type="entry name" value="baf"/>
    <property type="match status" value="1"/>
</dbReference>
<dbReference type="NCBIfam" id="NF009843">
    <property type="entry name" value="PRK13318.1-1"/>
    <property type="match status" value="1"/>
</dbReference>
<dbReference type="NCBIfam" id="NF009847">
    <property type="entry name" value="PRK13318.1-5"/>
    <property type="match status" value="1"/>
</dbReference>
<dbReference type="NCBIfam" id="NF009848">
    <property type="entry name" value="PRK13318.1-6"/>
    <property type="match status" value="1"/>
</dbReference>
<dbReference type="NCBIfam" id="NF009855">
    <property type="entry name" value="PRK13321.1"/>
    <property type="match status" value="1"/>
</dbReference>
<dbReference type="PANTHER" id="PTHR34265">
    <property type="entry name" value="TYPE III PANTOTHENATE KINASE"/>
    <property type="match status" value="1"/>
</dbReference>
<dbReference type="PANTHER" id="PTHR34265:SF1">
    <property type="entry name" value="TYPE III PANTOTHENATE KINASE"/>
    <property type="match status" value="1"/>
</dbReference>
<dbReference type="Pfam" id="PF03309">
    <property type="entry name" value="Pan_kinase"/>
    <property type="match status" value="1"/>
</dbReference>
<dbReference type="SUPFAM" id="SSF53067">
    <property type="entry name" value="Actin-like ATPase domain"/>
    <property type="match status" value="2"/>
</dbReference>
<organism>
    <name type="scientific">Listeria welshimeri serovar 6b (strain ATCC 35897 / DSM 20650 / CCUG 15529 / CIP 8149 / NCTC 11857 / SLCC 5334 / V8)</name>
    <dbReference type="NCBI Taxonomy" id="386043"/>
    <lineage>
        <taxon>Bacteria</taxon>
        <taxon>Bacillati</taxon>
        <taxon>Bacillota</taxon>
        <taxon>Bacilli</taxon>
        <taxon>Bacillales</taxon>
        <taxon>Listeriaceae</taxon>
        <taxon>Listeria</taxon>
    </lineage>
</organism>
<proteinExistence type="inferred from homology"/>
<protein>
    <recommendedName>
        <fullName evidence="1">Type III pantothenate kinase</fullName>
        <ecNumber evidence="1">2.7.1.33</ecNumber>
    </recommendedName>
    <alternativeName>
        <fullName evidence="1">PanK-III</fullName>
    </alternativeName>
    <alternativeName>
        <fullName evidence="1">Pantothenic acid kinase</fullName>
    </alternativeName>
</protein>
<feature type="chain" id="PRO_1000054385" description="Type III pantothenate kinase">
    <location>
        <begin position="1"/>
        <end position="259"/>
    </location>
</feature>
<feature type="active site" description="Proton acceptor" evidence="1">
    <location>
        <position position="109"/>
    </location>
</feature>
<feature type="binding site" evidence="1">
    <location>
        <begin position="6"/>
        <end position="13"/>
    </location>
    <ligand>
        <name>ATP</name>
        <dbReference type="ChEBI" id="CHEBI:30616"/>
    </ligand>
</feature>
<feature type="binding site" evidence="1">
    <location>
        <begin position="107"/>
        <end position="110"/>
    </location>
    <ligand>
        <name>substrate</name>
    </ligand>
</feature>
<feature type="binding site" evidence="1">
    <location>
        <position position="129"/>
    </location>
    <ligand>
        <name>K(+)</name>
        <dbReference type="ChEBI" id="CHEBI:29103"/>
    </ligand>
</feature>
<feature type="binding site" evidence="1">
    <location>
        <position position="132"/>
    </location>
    <ligand>
        <name>ATP</name>
        <dbReference type="ChEBI" id="CHEBI:30616"/>
    </ligand>
</feature>
<feature type="binding site" evidence="1">
    <location>
        <position position="184"/>
    </location>
    <ligand>
        <name>substrate</name>
    </ligand>
</feature>
<evidence type="ECO:0000255" key="1">
    <source>
        <dbReference type="HAMAP-Rule" id="MF_01274"/>
    </source>
</evidence>
<keyword id="KW-0067">ATP-binding</keyword>
<keyword id="KW-0173">Coenzyme A biosynthesis</keyword>
<keyword id="KW-0963">Cytoplasm</keyword>
<keyword id="KW-0418">Kinase</keyword>
<keyword id="KW-0479">Metal-binding</keyword>
<keyword id="KW-0547">Nucleotide-binding</keyword>
<keyword id="KW-0630">Potassium</keyword>
<keyword id="KW-0808">Transferase</keyword>
<name>COAX_LISW6</name>
<reference key="1">
    <citation type="journal article" date="2006" name="J. Bacteriol.">
        <title>Whole-genome sequence of Listeria welshimeri reveals common steps in genome reduction with Listeria innocua as compared to Listeria monocytogenes.</title>
        <authorList>
            <person name="Hain T."/>
            <person name="Steinweg C."/>
            <person name="Kuenne C.T."/>
            <person name="Billion A."/>
            <person name="Ghai R."/>
            <person name="Chatterjee S.S."/>
            <person name="Domann E."/>
            <person name="Kaerst U."/>
            <person name="Goesmann A."/>
            <person name="Bekel T."/>
            <person name="Bartels D."/>
            <person name="Kaiser O."/>
            <person name="Meyer F."/>
            <person name="Puehler A."/>
            <person name="Weisshaar B."/>
            <person name="Wehland J."/>
            <person name="Liang C."/>
            <person name="Dandekar T."/>
            <person name="Lampidis R."/>
            <person name="Kreft J."/>
            <person name="Goebel W."/>
            <person name="Chakraborty T."/>
        </authorList>
    </citation>
    <scope>NUCLEOTIDE SEQUENCE [LARGE SCALE GENOMIC DNA]</scope>
    <source>
        <strain>ATCC 35897 / DSM 20650 / CCUG 15529 / CIP 8149 / NCTC 11857 / SLCC 5334 / V8</strain>
    </source>
</reference>